<name>LEP_ECOLI</name>
<reference key="1">
    <citation type="journal article" date="1983" name="J. Biol. Chem.">
        <title>Sequence of the leader peptidase gene of Escherichia coli and the orientation of leader peptidase in the bacterial envelope.</title>
        <authorList>
            <person name="Wolfe P.B."/>
            <person name="Wickner W."/>
            <person name="Goodman J.M."/>
        </authorList>
    </citation>
    <scope>NUCLEOTIDE SEQUENCE [GENOMIC DNA]</scope>
</reference>
<reference key="2">
    <citation type="submission" date="1995-09" db="EMBL/GenBank/DDBJ databases">
        <authorList>
            <person name="Nashimoto H."/>
            <person name="Saito N."/>
        </authorList>
    </citation>
    <scope>NUCLEOTIDE SEQUENCE [GENOMIC DNA]</scope>
    <source>
        <strain>K12</strain>
    </source>
</reference>
<reference key="3">
    <citation type="journal article" date="1997" name="Science">
        <title>The complete genome sequence of Escherichia coli K-12.</title>
        <authorList>
            <person name="Blattner F.R."/>
            <person name="Plunkett G. III"/>
            <person name="Bloch C.A."/>
            <person name="Perna N.T."/>
            <person name="Burland V."/>
            <person name="Riley M."/>
            <person name="Collado-Vides J."/>
            <person name="Glasner J.D."/>
            <person name="Rode C.K."/>
            <person name="Mayhew G.F."/>
            <person name="Gregor J."/>
            <person name="Davis N.W."/>
            <person name="Kirkpatrick H.A."/>
            <person name="Goeden M.A."/>
            <person name="Rose D.J."/>
            <person name="Mau B."/>
            <person name="Shao Y."/>
        </authorList>
    </citation>
    <scope>NUCLEOTIDE SEQUENCE [LARGE SCALE GENOMIC DNA]</scope>
    <source>
        <strain>K12 / MG1655 / ATCC 47076</strain>
    </source>
</reference>
<reference key="4">
    <citation type="journal article" date="2006" name="Mol. Syst. Biol.">
        <title>Highly accurate genome sequences of Escherichia coli K-12 strains MG1655 and W3110.</title>
        <authorList>
            <person name="Hayashi K."/>
            <person name="Morooka N."/>
            <person name="Yamamoto Y."/>
            <person name="Fujita K."/>
            <person name="Isono K."/>
            <person name="Choi S."/>
            <person name="Ohtsubo E."/>
            <person name="Baba T."/>
            <person name="Wanner B.L."/>
            <person name="Mori H."/>
            <person name="Horiuchi T."/>
        </authorList>
    </citation>
    <scope>NUCLEOTIDE SEQUENCE [LARGE SCALE GENOMIC DNA]</scope>
    <source>
        <strain>K12 / W3110 / ATCC 27325 / DSM 5911</strain>
    </source>
</reference>
<reference key="5">
    <citation type="journal article" date="1986" name="EMBO J.">
        <title>The distribution of positively charged residues in bacterial inner membrane proteins correlates with the trans-membrane topology.</title>
        <authorList>
            <person name="von Heijne G."/>
        </authorList>
    </citation>
    <scope>TOPOLOGY</scope>
</reference>
<reference key="6">
    <citation type="journal article" date="1990" name="EMBO J.">
        <title>Mapping of catalytically important domains in Escherichia coli leader peptidase.</title>
        <authorList>
            <person name="Bilgin N."/>
            <person name="Lee J.I."/>
            <person name="Zhu H.Y."/>
            <person name="Dalbey R."/>
            <person name="von Heijne G."/>
        </authorList>
    </citation>
    <scope>TOPOLOGY</scope>
</reference>
<reference key="7">
    <citation type="journal article" date="1992" name="J. Biol. Chem.">
        <title>Identification of potential active-site residues in the Escherichia coli leader peptidase.</title>
        <authorList>
            <person name="Sung M."/>
            <person name="Dalbey R.E."/>
        </authorList>
    </citation>
    <scope>MUTAGENESIS</scope>
    <scope>ACTIVE SITES</scope>
</reference>
<reference key="8">
    <citation type="journal article" date="1992" name="Biochem. J.">
        <title>On the catalytic mechanism of prokaryotic leader peptidase 1.</title>
        <authorList>
            <person name="Black M.T."/>
            <person name="Munn J.G.R."/>
            <person name="Allsop A.E."/>
        </authorList>
    </citation>
    <scope>MUTAGENESIS</scope>
    <source>
        <strain>HJM114</strain>
        <strain>IT41</strain>
    </source>
</reference>
<reference key="9">
    <citation type="journal article" date="1993" name="J. Bacteriol.">
        <title>Evidence that the catalytic activity of prokaryote leader peptidase depends upon the operation of a serine-lysine catalytic dyad.</title>
        <authorList>
            <person name="Black M.T."/>
        </authorList>
    </citation>
    <scope>MUTAGENESIS</scope>
    <scope>ACTIVE SITES</scope>
</reference>
<reference key="10">
    <citation type="journal article" date="1989" name="J. Bacteriol.">
        <title>Use of phoA fusions to study the topology of the Escherichia coli inner membrane protein leader peptidase.</title>
        <authorList>
            <person name="San Millan J.L."/>
            <person name="Boyd D."/>
            <person name="Dalbey R."/>
            <person name="Wickner W."/>
            <person name="Beckwith J."/>
        </authorList>
    </citation>
    <scope>TOPOLOGY</scope>
</reference>
<reference key="11">
    <citation type="journal article" date="2005" name="Science">
        <title>Global topology analysis of the Escherichia coli inner membrane proteome.</title>
        <authorList>
            <person name="Daley D.O."/>
            <person name="Rapp M."/>
            <person name="Granseth E."/>
            <person name="Melen K."/>
            <person name="Drew D."/>
            <person name="von Heijne G."/>
        </authorList>
    </citation>
    <scope>TOPOLOGY [LARGE SCALE ANALYSIS]</scope>
    <source>
        <strain>K12 / MG1655 / ATCC 47076</strain>
    </source>
</reference>
<reference key="12">
    <citation type="journal article" date="2011" name="J. Biol. Chem.">
        <title>Membrane localization of small proteins in Escherichia coli.</title>
        <authorList>
            <person name="Fontaine F."/>
            <person name="Fuchs R.T."/>
            <person name="Storz G."/>
        </authorList>
    </citation>
    <scope>SUBCELLULAR LOCATION</scope>
    <source>
        <strain>K12 / MG1655 / ATCC 47076</strain>
    </source>
</reference>
<reference key="13">
    <citation type="journal article" date="1998" name="Nature">
        <title>Crystal structure of a bacterial signal peptidase in complex with a beta-lactam inhibitor.</title>
        <authorList>
            <person name="Paetzel M."/>
            <person name="Dalbey R.E."/>
            <person name="Strynadka N.C."/>
        </authorList>
    </citation>
    <scope>X-RAY CRYSTALLOGRAPHY (1.95 ANGSTROMS) OF 77-324</scope>
</reference>
<sequence length="324" mass="35960">MANMFALILVIATLVTGILWCVDKFFFAPKRRERQAAAQAAAGDSLDKATLKKVAPKPGWLETGASVFPVLAIVLIVRSFIYEPFQIPSGSMMPTLLIGDFILVEKFAYGIKDPIYQKTLIETGHPKRGDIVVFKYPEDPKLDYIKRAVGLPGDKVTYDPVSKELTIQPGCSSGQACENALPVTYSNVEPSDFVQTFSRRNGGEATSGFFEVPKNETKENGIRLSERKETLGDVTHRILTVPIAQDQVGMYYQQPGQQLATWIVPPGQYFMMGDNRDNSADSRYWGFVPEANLVGRATAIWMSFDKQEGEWPTGLRLSRIGGIH</sequence>
<dbReference type="EC" id="3.4.21.89"/>
<dbReference type="EMBL" id="K00426">
    <property type="protein sequence ID" value="AAA24064.1"/>
    <property type="molecule type" value="Genomic_DNA"/>
</dbReference>
<dbReference type="EMBL" id="D64044">
    <property type="protein sequence ID" value="BAA10915.1"/>
    <property type="molecule type" value="Genomic_DNA"/>
</dbReference>
<dbReference type="EMBL" id="U00096">
    <property type="protein sequence ID" value="AAC75621.1"/>
    <property type="molecule type" value="Genomic_DNA"/>
</dbReference>
<dbReference type="EMBL" id="AP009048">
    <property type="protein sequence ID" value="BAE76744.1"/>
    <property type="molecule type" value="Genomic_DNA"/>
</dbReference>
<dbReference type="PIR" id="G65034">
    <property type="entry name" value="ZPECS"/>
</dbReference>
<dbReference type="RefSeq" id="NP_417063.1">
    <property type="nucleotide sequence ID" value="NC_000913.3"/>
</dbReference>
<dbReference type="RefSeq" id="WP_000002541.1">
    <property type="nucleotide sequence ID" value="NZ_STEB01000011.1"/>
</dbReference>
<dbReference type="PDB" id="1B12">
    <property type="method" value="X-ray"/>
    <property type="resolution" value="1.95 A"/>
    <property type="chains" value="A/B/C/D=77-324"/>
</dbReference>
<dbReference type="PDB" id="1KN9">
    <property type="method" value="X-ray"/>
    <property type="resolution" value="2.40 A"/>
    <property type="chains" value="A/B/C/D=77-324"/>
</dbReference>
<dbReference type="PDB" id="1T7D">
    <property type="method" value="X-ray"/>
    <property type="resolution" value="2.47 A"/>
    <property type="chains" value="A/B=76-324"/>
</dbReference>
<dbReference type="PDB" id="3IIQ">
    <property type="method" value="X-ray"/>
    <property type="resolution" value="2.00 A"/>
    <property type="chains" value="A/B=77-324"/>
</dbReference>
<dbReference type="PDB" id="3S04">
    <property type="method" value="X-ray"/>
    <property type="resolution" value="2.44 A"/>
    <property type="chains" value="A/B=76-324"/>
</dbReference>
<dbReference type="PDB" id="6B88">
    <property type="method" value="X-ray"/>
    <property type="resolution" value="2.41 A"/>
    <property type="chains" value="A/B=78-324"/>
</dbReference>
<dbReference type="PDBsum" id="1B12"/>
<dbReference type="PDBsum" id="1KN9"/>
<dbReference type="PDBsum" id="1T7D"/>
<dbReference type="PDBsum" id="3IIQ"/>
<dbReference type="PDBsum" id="3S04"/>
<dbReference type="PDBsum" id="6B88"/>
<dbReference type="SMR" id="P00803"/>
<dbReference type="BioGRID" id="4259467">
    <property type="interactions" value="112"/>
</dbReference>
<dbReference type="FunCoup" id="P00803">
    <property type="interactions" value="461"/>
</dbReference>
<dbReference type="STRING" id="511145.b2568"/>
<dbReference type="BindingDB" id="P00803"/>
<dbReference type="ChEMBL" id="CHEMBL4470"/>
<dbReference type="DrugBank" id="DB06904">
    <property type="generic name" value="(5S,6S)-6-[(R)ACETOXYETH-2-YL]-PENEM-3-CARBOXYLATEPROPANE"/>
</dbReference>
<dbReference type="DrugBank" id="DB02080">
    <property type="generic name" value="1-{2-[2-(2-Methoxyethoxy)Ethoxy]Ethoxy}-4-(1,1,3,3-Tetramethylbutyl)Benzene"/>
</dbReference>
<dbReference type="DrugBank" id="DB01934">
    <property type="generic name" value="Arylomycin A2"/>
</dbReference>
<dbReference type="MEROPS" id="S26.001"/>
<dbReference type="TCDB" id="9.B.391.1.3">
    <property type="family name" value="the eukaryotic inner membrane peptidase complex (impc) family"/>
</dbReference>
<dbReference type="jPOST" id="P00803"/>
<dbReference type="PaxDb" id="511145-b2568"/>
<dbReference type="EnsemblBacteria" id="AAC75621">
    <property type="protein sequence ID" value="AAC75621"/>
    <property type="gene ID" value="b2568"/>
</dbReference>
<dbReference type="GeneID" id="947040"/>
<dbReference type="KEGG" id="ecj:JW2552"/>
<dbReference type="KEGG" id="eco:b2568"/>
<dbReference type="KEGG" id="ecoc:C3026_14225"/>
<dbReference type="PATRIC" id="fig|1411691.4.peg.4166"/>
<dbReference type="EchoBASE" id="EB0525"/>
<dbReference type="eggNOG" id="COG0681">
    <property type="taxonomic scope" value="Bacteria"/>
</dbReference>
<dbReference type="HOGENOM" id="CLU_028723_1_1_6"/>
<dbReference type="InParanoid" id="P00803"/>
<dbReference type="OMA" id="FKWAPAR"/>
<dbReference type="OrthoDB" id="9815782at2"/>
<dbReference type="PhylomeDB" id="P00803"/>
<dbReference type="BioCyc" id="EcoCyc:EG10530-MONOMER"/>
<dbReference type="BioCyc" id="MetaCyc:EG10530-MONOMER"/>
<dbReference type="BRENDA" id="3.4.21.89">
    <property type="organism ID" value="2026"/>
</dbReference>
<dbReference type="SABIO-RK" id="P00803"/>
<dbReference type="EvolutionaryTrace" id="P00803"/>
<dbReference type="PRO" id="PR:P00803"/>
<dbReference type="Proteomes" id="UP000000625">
    <property type="component" value="Chromosome"/>
</dbReference>
<dbReference type="GO" id="GO:0005886">
    <property type="term" value="C:plasma membrane"/>
    <property type="evidence" value="ECO:0000314"/>
    <property type="project" value="EcoliWiki"/>
</dbReference>
<dbReference type="GO" id="GO:0004175">
    <property type="term" value="F:endopeptidase activity"/>
    <property type="evidence" value="ECO:0000314"/>
    <property type="project" value="EcoCyc"/>
</dbReference>
<dbReference type="GO" id="GO:0008233">
    <property type="term" value="F:peptidase activity"/>
    <property type="evidence" value="ECO:0000314"/>
    <property type="project" value="EcoliWiki"/>
</dbReference>
<dbReference type="GO" id="GO:0004252">
    <property type="term" value="F:serine-type endopeptidase activity"/>
    <property type="evidence" value="ECO:0000315"/>
    <property type="project" value="EcoCyc"/>
</dbReference>
<dbReference type="GO" id="GO:0016485">
    <property type="term" value="P:protein processing"/>
    <property type="evidence" value="ECO:0000315"/>
    <property type="project" value="EcoliWiki"/>
</dbReference>
<dbReference type="GO" id="GO:0006508">
    <property type="term" value="P:proteolysis"/>
    <property type="evidence" value="ECO:0000314"/>
    <property type="project" value="EcoliWiki"/>
</dbReference>
<dbReference type="GO" id="GO:0006465">
    <property type="term" value="P:signal peptide processing"/>
    <property type="evidence" value="ECO:0000314"/>
    <property type="project" value="EcoCyc"/>
</dbReference>
<dbReference type="CDD" id="cd06530">
    <property type="entry name" value="S26_SPase_I"/>
    <property type="match status" value="1"/>
</dbReference>
<dbReference type="FunFam" id="2.170.230.10:FF:000001">
    <property type="entry name" value="Signal peptidase I"/>
    <property type="match status" value="1"/>
</dbReference>
<dbReference type="Gene3D" id="2.170.230.10">
    <property type="match status" value="1"/>
</dbReference>
<dbReference type="Gene3D" id="2.10.109.10">
    <property type="entry name" value="Umud Fragment, subunit A"/>
    <property type="match status" value="1"/>
</dbReference>
<dbReference type="InterPro" id="IPR036286">
    <property type="entry name" value="LexA/Signal_pep-like_sf"/>
</dbReference>
<dbReference type="InterPro" id="IPR000223">
    <property type="entry name" value="Pept_S26A_signal_pept_1"/>
</dbReference>
<dbReference type="InterPro" id="IPR019758">
    <property type="entry name" value="Pept_S26A_signal_pept_1_CS"/>
</dbReference>
<dbReference type="InterPro" id="IPR019757">
    <property type="entry name" value="Pept_S26A_signal_pept_1_Lys-AS"/>
</dbReference>
<dbReference type="InterPro" id="IPR019756">
    <property type="entry name" value="Pept_S26A_signal_pept_1_Ser-AS"/>
</dbReference>
<dbReference type="InterPro" id="IPR019533">
    <property type="entry name" value="Peptidase_S26"/>
</dbReference>
<dbReference type="InterPro" id="IPR019766">
    <property type="entry name" value="Sign_pep_all-beta_subdom"/>
</dbReference>
<dbReference type="NCBIfam" id="NF008114">
    <property type="entry name" value="PRK10861.1"/>
    <property type="match status" value="1"/>
</dbReference>
<dbReference type="NCBIfam" id="TIGR02227">
    <property type="entry name" value="sigpep_I_bact"/>
    <property type="match status" value="1"/>
</dbReference>
<dbReference type="PANTHER" id="PTHR43390:SF1">
    <property type="entry name" value="CHLOROPLAST PROCESSING PEPTIDASE"/>
    <property type="match status" value="1"/>
</dbReference>
<dbReference type="PANTHER" id="PTHR43390">
    <property type="entry name" value="SIGNAL PEPTIDASE I"/>
    <property type="match status" value="1"/>
</dbReference>
<dbReference type="Pfam" id="PF10502">
    <property type="entry name" value="Peptidase_S26"/>
    <property type="match status" value="1"/>
</dbReference>
<dbReference type="PRINTS" id="PR00727">
    <property type="entry name" value="LEADERPTASE"/>
</dbReference>
<dbReference type="SUPFAM" id="SSF51306">
    <property type="entry name" value="LexA/Signal peptidase"/>
    <property type="match status" value="1"/>
</dbReference>
<dbReference type="PROSITE" id="PS00501">
    <property type="entry name" value="SPASE_I_1"/>
    <property type="match status" value="1"/>
</dbReference>
<dbReference type="PROSITE" id="PS00760">
    <property type="entry name" value="SPASE_I_2"/>
    <property type="match status" value="1"/>
</dbReference>
<dbReference type="PROSITE" id="PS00761">
    <property type="entry name" value="SPASE_I_3"/>
    <property type="match status" value="1"/>
</dbReference>
<keyword id="KW-0002">3D-structure</keyword>
<keyword id="KW-0997">Cell inner membrane</keyword>
<keyword id="KW-1003">Cell membrane</keyword>
<keyword id="KW-1015">Disulfide bond</keyword>
<keyword id="KW-0378">Hydrolase</keyword>
<keyword id="KW-0472">Membrane</keyword>
<keyword id="KW-0645">Protease</keyword>
<keyword id="KW-1185">Reference proteome</keyword>
<keyword id="KW-0812">Transmembrane</keyword>
<keyword id="KW-1133">Transmembrane helix</keyword>
<accession>P00803</accession>
<accession>P78098</accession>
<accession>Q2MAG2</accession>
<comment type="catalytic activity">
    <reaction>
        <text>Cleavage of hydrophobic, N-terminal signal or leader sequences from secreted and periplasmic proteins.</text>
        <dbReference type="EC" id="3.4.21.89"/>
    </reaction>
</comment>
<comment type="subcellular location">
    <subcellularLocation>
        <location evidence="1">Cell inner membrane</location>
        <topology evidence="1">Multi-pass membrane protein</topology>
    </subcellularLocation>
</comment>
<comment type="similarity">
    <text evidence="3">Belongs to the peptidase S26 family.</text>
</comment>
<gene>
    <name type="primary">lepB</name>
    <name type="ordered locus">b2568</name>
    <name type="ordered locus">JW2552</name>
</gene>
<feature type="chain" id="PRO_0000109506" description="Signal peptidase I">
    <location>
        <begin position="1"/>
        <end position="324"/>
    </location>
</feature>
<feature type="topological domain" description="Periplasmic" evidence="3">
    <location>
        <begin position="1"/>
        <end position="3"/>
    </location>
</feature>
<feature type="transmembrane region" description="Helical" evidence="3">
    <location>
        <begin position="4"/>
        <end position="22"/>
    </location>
</feature>
<feature type="topological domain" description="Cytoplasmic" evidence="3">
    <location>
        <begin position="23"/>
        <end position="58"/>
    </location>
</feature>
<feature type="transmembrane region" description="Helical" evidence="3">
    <location>
        <begin position="59"/>
        <end position="77"/>
    </location>
</feature>
<feature type="topological domain" description="Periplasmic" evidence="3">
    <location>
        <begin position="78"/>
        <end position="324"/>
    </location>
</feature>
<feature type="active site">
    <location>
        <position position="91"/>
    </location>
</feature>
<feature type="active site">
    <location>
        <position position="146"/>
    </location>
</feature>
<feature type="modified residue" description="Blocked amino end (Met)" evidence="2">
    <location>
        <position position="1"/>
    </location>
</feature>
<feature type="disulfide bond">
    <location>
        <begin position="171"/>
        <end position="177"/>
    </location>
</feature>
<feature type="mutagenesis site" description="Indifferent.">
    <original>E</original>
    <variation>V</variation>
    <location>
        <position position="62"/>
    </location>
</feature>
<feature type="mutagenesis site" description="Indifferent.">
    <original>R</original>
    <variation>E</variation>
    <variation>N</variation>
    <variation>L</variation>
    <location>
        <position position="78"/>
    </location>
</feature>
<feature type="mutagenesis site" description="Loss of activity.">
    <original>S</original>
    <variation>A</variation>
    <location>
        <position position="91"/>
    </location>
</feature>
<feature type="mutagenesis site" description="Indifferent.">
    <original>H</original>
    <variation>N</variation>
    <location>
        <position position="125"/>
    </location>
</feature>
<feature type="mutagenesis site" description="Small effect.">
    <original>R</original>
    <variation>Q</variation>
    <location>
        <position position="128"/>
    </location>
</feature>
<feature type="mutagenesis site" description="Indifferent.">
    <original>D</original>
    <variation>A</variation>
    <location>
        <position position="130"/>
    </location>
</feature>
<feature type="mutagenesis site" description="Indifferent.">
    <original>Y</original>
    <variation>F</variation>
    <location>
        <position position="144"/>
    </location>
</feature>
<feature type="mutagenesis site" description="Loss of activity.">
    <original>K</original>
    <variation>M</variation>
    <variation>D</variation>
    <variation>G</variation>
    <variation>S</variation>
    <location>
        <position position="146"/>
    </location>
</feature>
<feature type="mutagenesis site" description="Small effect.">
    <original>R</original>
    <variation>Q</variation>
    <location>
        <position position="147"/>
    </location>
</feature>
<feature type="mutagenesis site" description="Loss of activity.">
    <original>D</original>
    <variation>A</variation>
    <location>
        <position position="154"/>
    </location>
</feature>
<feature type="mutagenesis site" description="Indifferent.">
    <original>D</original>
    <variation>N</variation>
    <location>
        <position position="154"/>
    </location>
</feature>
<feature type="mutagenesis site" description="Small effect.">
    <original>D</original>
    <variation>N</variation>
    <location>
        <position position="159"/>
    </location>
</feature>
<feature type="mutagenesis site" description="Indifferent.">
    <original>C</original>
    <variation>A</variation>
    <location>
        <position position="171"/>
    </location>
</feature>
<feature type="mutagenesis site" description="Indifferent.">
    <original>C</original>
    <variation>A</variation>
    <location>
        <position position="177"/>
    </location>
</feature>
<feature type="mutagenesis site" description="Indifferent.">
    <original>H</original>
    <variation>N</variation>
    <location>
        <position position="236"/>
    </location>
</feature>
<feature type="mutagenesis site" description="Indifferent.">
    <original>Y</original>
    <variation>F</variation>
    <location>
        <position position="269"/>
    </location>
</feature>
<feature type="mutagenesis site" description="Indifferent.">
    <original>D</original>
    <variation>A</variation>
    <location>
        <position position="274"/>
    </location>
</feature>
<feature type="mutagenesis site" description="Small effect.">
    <original>R</original>
    <variation>Q</variation>
    <location>
        <position position="276"/>
    </location>
</feature>
<feature type="mutagenesis site" description="Indifferent.">
    <original>D</original>
    <variation>A</variation>
    <location>
        <position position="281"/>
    </location>
</feature>
<feature type="mutagenesis site" description="Small effect.">
    <original>R</original>
    <variation>Q</variation>
    <location>
        <position position="283"/>
    </location>
</feature>
<feature type="sequence conflict" description="In Ref. 1 and 2." evidence="3" ref="1 2">
    <original>AG</original>
    <variation>R</variation>
    <location>
        <begin position="42"/>
        <end position="43"/>
    </location>
</feature>
<feature type="sequence conflict" description="In Ref. 1 and 2." evidence="3" ref="1 2">
    <original>T</original>
    <variation>N</variation>
    <location>
        <position position="123"/>
    </location>
</feature>
<feature type="sequence conflict" description="In Ref. 1 and 2." evidence="3" ref="1 2">
    <original>V</original>
    <variation>A</variation>
    <location>
        <position position="183"/>
    </location>
</feature>
<feature type="strand" evidence="4">
    <location>
        <begin position="82"/>
        <end position="86"/>
    </location>
</feature>
<feature type="turn" evidence="4">
    <location>
        <begin position="91"/>
        <end position="95"/>
    </location>
</feature>
<feature type="strand" evidence="4">
    <location>
        <begin position="100"/>
        <end position="112"/>
    </location>
</feature>
<feature type="helix" evidence="4">
    <location>
        <begin position="114"/>
        <end position="116"/>
    </location>
</feature>
<feature type="strand" evidence="4">
    <location>
        <begin position="119"/>
        <end position="123"/>
    </location>
</feature>
<feature type="strand" evidence="4">
    <location>
        <begin position="131"/>
        <end position="135"/>
    </location>
</feature>
<feature type="strand" evidence="4">
    <location>
        <begin position="142"/>
        <end position="150"/>
    </location>
</feature>
<feature type="strand" evidence="4">
    <location>
        <begin position="155"/>
        <end position="159"/>
    </location>
</feature>
<feature type="turn" evidence="4">
    <location>
        <begin position="160"/>
        <end position="163"/>
    </location>
</feature>
<feature type="strand" evidence="4">
    <location>
        <begin position="164"/>
        <end position="168"/>
    </location>
</feature>
<feature type="strand" evidence="5">
    <location>
        <begin position="174"/>
        <end position="176"/>
    </location>
</feature>
<feature type="strand" evidence="4">
    <location>
        <begin position="183"/>
        <end position="185"/>
    </location>
</feature>
<feature type="strand" evidence="4">
    <location>
        <begin position="189"/>
        <end position="198"/>
    </location>
</feature>
<feature type="helix" evidence="4">
    <location>
        <begin position="200"/>
        <end position="202"/>
    </location>
</feature>
<feature type="strand" evidence="4">
    <location>
        <begin position="205"/>
        <end position="211"/>
    </location>
</feature>
<feature type="strand" evidence="5">
    <location>
        <begin position="214"/>
        <end position="216"/>
    </location>
</feature>
<feature type="strand" evidence="4">
    <location>
        <begin position="221"/>
        <end position="231"/>
    </location>
</feature>
<feature type="strand" evidence="4">
    <location>
        <begin position="234"/>
        <end position="240"/>
    </location>
</feature>
<feature type="helix" evidence="4">
    <location>
        <begin position="248"/>
        <end position="250"/>
    </location>
</feature>
<feature type="strand" evidence="4">
    <location>
        <begin position="261"/>
        <end position="263"/>
    </location>
</feature>
<feature type="strand" evidence="4">
    <location>
        <begin position="268"/>
        <end position="272"/>
    </location>
</feature>
<feature type="helix" evidence="4">
    <location>
        <begin position="282"/>
        <end position="285"/>
    </location>
</feature>
<feature type="helix" evidence="4">
    <location>
        <begin position="290"/>
        <end position="292"/>
    </location>
</feature>
<feature type="strand" evidence="4">
    <location>
        <begin position="293"/>
        <end position="304"/>
    </location>
</feature>
<feature type="strand" evidence="4">
    <location>
        <begin position="310"/>
        <end position="312"/>
    </location>
</feature>
<feature type="strand" evidence="6">
    <location>
        <begin position="313"/>
        <end position="315"/>
    </location>
</feature>
<feature type="helix" evidence="4">
    <location>
        <begin position="317"/>
        <end position="319"/>
    </location>
</feature>
<protein>
    <recommendedName>
        <fullName>Signal peptidase I</fullName>
        <shortName>SPase I</shortName>
        <ecNumber>3.4.21.89</ecNumber>
    </recommendedName>
    <alternativeName>
        <fullName>Leader peptidase I</fullName>
    </alternativeName>
</protein>
<organism>
    <name type="scientific">Escherichia coli (strain K12)</name>
    <dbReference type="NCBI Taxonomy" id="83333"/>
    <lineage>
        <taxon>Bacteria</taxon>
        <taxon>Pseudomonadati</taxon>
        <taxon>Pseudomonadota</taxon>
        <taxon>Gammaproteobacteria</taxon>
        <taxon>Enterobacterales</taxon>
        <taxon>Enterobacteriaceae</taxon>
        <taxon>Escherichia</taxon>
    </lineage>
</organism>
<evidence type="ECO:0000269" key="1">
    <source>
    </source>
</evidence>
<evidence type="ECO:0000269" key="2">
    <source>
    </source>
</evidence>
<evidence type="ECO:0000305" key="3"/>
<evidence type="ECO:0007829" key="4">
    <source>
        <dbReference type="PDB" id="1B12"/>
    </source>
</evidence>
<evidence type="ECO:0007829" key="5">
    <source>
        <dbReference type="PDB" id="1T7D"/>
    </source>
</evidence>
<evidence type="ECO:0007829" key="6">
    <source>
        <dbReference type="PDB" id="3IIQ"/>
    </source>
</evidence>
<proteinExistence type="evidence at protein level"/>